<comment type="function">
    <text evidence="1">Catalyzes the NADPH-dependent reduction of glutamyl-tRNA(Glu) to glutamate 1-semialdehyde (GSA).</text>
</comment>
<comment type="catalytic activity">
    <reaction evidence="1">
        <text>(S)-4-amino-5-oxopentanoate + tRNA(Glu) + NADP(+) = L-glutamyl-tRNA(Glu) + NADPH + H(+)</text>
        <dbReference type="Rhea" id="RHEA:12344"/>
        <dbReference type="Rhea" id="RHEA-COMP:9663"/>
        <dbReference type="Rhea" id="RHEA-COMP:9680"/>
        <dbReference type="ChEBI" id="CHEBI:15378"/>
        <dbReference type="ChEBI" id="CHEBI:57501"/>
        <dbReference type="ChEBI" id="CHEBI:57783"/>
        <dbReference type="ChEBI" id="CHEBI:58349"/>
        <dbReference type="ChEBI" id="CHEBI:78442"/>
        <dbReference type="ChEBI" id="CHEBI:78520"/>
        <dbReference type="EC" id="1.2.1.70"/>
    </reaction>
</comment>
<comment type="pathway">
    <text evidence="1">Porphyrin-containing compound metabolism; protoporphyrin-IX biosynthesis; 5-aminolevulinate from L-glutamyl-tRNA(Glu): step 1/2.</text>
</comment>
<comment type="subunit">
    <text evidence="1">Homodimer.</text>
</comment>
<comment type="domain">
    <text evidence="1">Possesses an unusual extended V-shaped dimeric structure with each monomer consisting of three distinct domains arranged along a curved 'spinal' alpha-helix. The N-terminal catalytic domain specifically recognizes the glutamate moiety of the substrate. The second domain is the NADPH-binding domain, and the third C-terminal domain is responsible for dimerization.</text>
</comment>
<comment type="miscellaneous">
    <text evidence="1">During catalysis, the active site Cys acts as a nucleophile attacking the alpha-carbonyl group of tRNA-bound glutamate with the formation of a thioester intermediate between enzyme and glutamate, and the concomitant release of tRNA(Glu). The thioester intermediate is finally reduced by direct hydride transfer from NADPH, to form the product GSA.</text>
</comment>
<comment type="similarity">
    <text evidence="1">Belongs to the glutamyl-tRNA reductase family.</text>
</comment>
<evidence type="ECO:0000255" key="1">
    <source>
        <dbReference type="HAMAP-Rule" id="MF_00087"/>
    </source>
</evidence>
<gene>
    <name evidence="1" type="primary">hemA</name>
    <name type="ordered locus">CLL_A2909</name>
</gene>
<keyword id="KW-0521">NADP</keyword>
<keyword id="KW-0560">Oxidoreductase</keyword>
<keyword id="KW-0627">Porphyrin biosynthesis</keyword>
<proteinExistence type="inferred from homology"/>
<reference key="1">
    <citation type="submission" date="2008-04" db="EMBL/GenBank/DDBJ databases">
        <title>Complete sequence of Clostridium botulinum strain Eklund.</title>
        <authorList>
            <person name="Brinkac L.M."/>
            <person name="Brown J.L."/>
            <person name="Bruce D."/>
            <person name="Detter C."/>
            <person name="Munk C."/>
            <person name="Smith L.A."/>
            <person name="Smith T.J."/>
            <person name="Sutton G."/>
            <person name="Brettin T.S."/>
        </authorList>
    </citation>
    <scope>NUCLEOTIDE SEQUENCE [LARGE SCALE GENOMIC DNA]</scope>
    <source>
        <strain>Eklund 17B / Type B</strain>
    </source>
</reference>
<dbReference type="EC" id="1.2.1.70" evidence="1"/>
<dbReference type="EMBL" id="CP001056">
    <property type="protein sequence ID" value="ACD24804.1"/>
    <property type="molecule type" value="Genomic_DNA"/>
</dbReference>
<dbReference type="SMR" id="B2TPD9"/>
<dbReference type="KEGG" id="cbk:CLL_A2909"/>
<dbReference type="PATRIC" id="fig|935198.13.peg.2871"/>
<dbReference type="HOGENOM" id="CLU_035113_1_0_9"/>
<dbReference type="UniPathway" id="UPA00251">
    <property type="reaction ID" value="UER00316"/>
</dbReference>
<dbReference type="Proteomes" id="UP000001195">
    <property type="component" value="Chromosome"/>
</dbReference>
<dbReference type="GO" id="GO:0008883">
    <property type="term" value="F:glutamyl-tRNA reductase activity"/>
    <property type="evidence" value="ECO:0007669"/>
    <property type="project" value="UniProtKB-UniRule"/>
</dbReference>
<dbReference type="GO" id="GO:0050661">
    <property type="term" value="F:NADP binding"/>
    <property type="evidence" value="ECO:0007669"/>
    <property type="project" value="InterPro"/>
</dbReference>
<dbReference type="GO" id="GO:0019353">
    <property type="term" value="P:protoporphyrinogen IX biosynthetic process from glutamate"/>
    <property type="evidence" value="ECO:0007669"/>
    <property type="project" value="TreeGrafter"/>
</dbReference>
<dbReference type="Gene3D" id="3.30.460.30">
    <property type="entry name" value="Glutamyl-tRNA reductase, N-terminal domain"/>
    <property type="match status" value="1"/>
</dbReference>
<dbReference type="Gene3D" id="3.40.50.720">
    <property type="entry name" value="NAD(P)-binding Rossmann-like Domain"/>
    <property type="match status" value="1"/>
</dbReference>
<dbReference type="HAMAP" id="MF_00087">
    <property type="entry name" value="Glu_tRNA_reductase"/>
    <property type="match status" value="1"/>
</dbReference>
<dbReference type="InterPro" id="IPR000343">
    <property type="entry name" value="4pyrrol_synth_GluRdtase"/>
</dbReference>
<dbReference type="InterPro" id="IPR015896">
    <property type="entry name" value="4pyrrol_synth_GluRdtase_dimer"/>
</dbReference>
<dbReference type="InterPro" id="IPR015895">
    <property type="entry name" value="4pyrrol_synth_GluRdtase_N"/>
</dbReference>
<dbReference type="InterPro" id="IPR018214">
    <property type="entry name" value="GluRdtase_CS"/>
</dbReference>
<dbReference type="InterPro" id="IPR036343">
    <property type="entry name" value="GluRdtase_N_sf"/>
</dbReference>
<dbReference type="InterPro" id="IPR036291">
    <property type="entry name" value="NAD(P)-bd_dom_sf"/>
</dbReference>
<dbReference type="InterPro" id="IPR006151">
    <property type="entry name" value="Shikm_DH/Glu-tRNA_Rdtase"/>
</dbReference>
<dbReference type="NCBIfam" id="TIGR01035">
    <property type="entry name" value="hemA"/>
    <property type="match status" value="1"/>
</dbReference>
<dbReference type="PANTHER" id="PTHR43013">
    <property type="entry name" value="GLUTAMYL-TRNA REDUCTASE"/>
    <property type="match status" value="1"/>
</dbReference>
<dbReference type="PANTHER" id="PTHR43013:SF1">
    <property type="entry name" value="GLUTAMYL-TRNA REDUCTASE"/>
    <property type="match status" value="1"/>
</dbReference>
<dbReference type="Pfam" id="PF00745">
    <property type="entry name" value="GlutR_dimer"/>
    <property type="match status" value="1"/>
</dbReference>
<dbReference type="Pfam" id="PF05201">
    <property type="entry name" value="GlutR_N"/>
    <property type="match status" value="1"/>
</dbReference>
<dbReference type="Pfam" id="PF01488">
    <property type="entry name" value="Shikimate_DH"/>
    <property type="match status" value="1"/>
</dbReference>
<dbReference type="PIRSF" id="PIRSF000445">
    <property type="entry name" value="4pyrrol_synth_GluRdtase"/>
    <property type="match status" value="1"/>
</dbReference>
<dbReference type="SUPFAM" id="SSF69742">
    <property type="entry name" value="Glutamyl tRNA-reductase catalytic, N-terminal domain"/>
    <property type="match status" value="1"/>
</dbReference>
<dbReference type="SUPFAM" id="SSF51735">
    <property type="entry name" value="NAD(P)-binding Rossmann-fold domains"/>
    <property type="match status" value="1"/>
</dbReference>
<dbReference type="PROSITE" id="PS00747">
    <property type="entry name" value="GLUTR"/>
    <property type="match status" value="1"/>
</dbReference>
<name>HEM1_CLOBB</name>
<accession>B2TPD9</accession>
<feature type="chain" id="PRO_1000093128" description="Glutamyl-tRNA reductase">
    <location>
        <begin position="1"/>
        <end position="401"/>
    </location>
</feature>
<feature type="active site" description="Nucleophile" evidence="1">
    <location>
        <position position="46"/>
    </location>
</feature>
<feature type="binding site" evidence="1">
    <location>
        <begin position="45"/>
        <end position="48"/>
    </location>
    <ligand>
        <name>substrate</name>
    </ligand>
</feature>
<feature type="binding site" evidence="1">
    <location>
        <position position="101"/>
    </location>
    <ligand>
        <name>substrate</name>
    </ligand>
</feature>
<feature type="binding site" evidence="1">
    <location>
        <begin position="106"/>
        <end position="108"/>
    </location>
    <ligand>
        <name>substrate</name>
    </ligand>
</feature>
<feature type="binding site" evidence="1">
    <location>
        <position position="112"/>
    </location>
    <ligand>
        <name>substrate</name>
    </ligand>
</feature>
<feature type="binding site" evidence="1">
    <location>
        <begin position="177"/>
        <end position="182"/>
    </location>
    <ligand>
        <name>NADP(+)</name>
        <dbReference type="ChEBI" id="CHEBI:58349"/>
    </ligand>
</feature>
<feature type="site" description="Important for activity" evidence="1">
    <location>
        <position position="91"/>
    </location>
</feature>
<organism>
    <name type="scientific">Clostridium botulinum (strain Eklund 17B / Type B)</name>
    <dbReference type="NCBI Taxonomy" id="935198"/>
    <lineage>
        <taxon>Bacteria</taxon>
        <taxon>Bacillati</taxon>
        <taxon>Bacillota</taxon>
        <taxon>Clostridia</taxon>
        <taxon>Eubacteriales</taxon>
        <taxon>Clostridiaceae</taxon>
        <taxon>Clostridium</taxon>
    </lineage>
</organism>
<protein>
    <recommendedName>
        <fullName evidence="1">Glutamyl-tRNA reductase</fullName>
        <shortName evidence="1">GluTR</shortName>
        <ecNumber evidence="1">1.2.1.70</ecNumber>
    </recommendedName>
</protein>
<sequence length="401" mass="47009">MIAVLGIKRNTPIEIREKLTIKVNKHDEYLDKLLKYLEGVVILATCNRTEIYFNVSSINEELLKKIFEIFNWNYSYRKYIFISEDKKACKHLFEVTCGFHSKILGEDQILGQVKTSYFKSLNAKALNLELQRLFQYAITCGKKFKSQSRLFEIPVSSASIVVNESINKDCKKFMVLGYGDVGRLTMKYLLAHNINEVYLAVRNKKIKDEIMDKRVNVIDFEEKNKYINDMDCVISCTSAPHIVIKKQDINNIGSNIIIYDLAVPRDVDDDINDIDRAQVYNIDNISHINDGNKKMRFDKMDSNKFILEKYLNEYYEWKRLRSIAPFIEELKVTSKEIYNKRITTFKNKCTDKDDVDLANRMIKSTSDYYMNRAIDIMKEETLKGSEEECLRIIKSIFMTKK</sequence>